<comment type="function">
    <text evidence="4">May regulate the dynamics and distribution of mitochondria in neural cells.</text>
</comment>
<comment type="subcellular location">
    <subcellularLocation>
        <location evidence="4">Mitochondrion</location>
    </subcellularLocation>
    <subcellularLocation>
        <location evidence="1">Mitochondrion outer membrane</location>
        <topology evidence="2">Single-pass membrane protein</topology>
    </subcellularLocation>
</comment>
<comment type="tissue specificity">
    <text evidence="4">Widely expressed in the adult nervous tissue, especially in the forebrain, including the cerebral cortex, hippocampus and thalamus.</text>
</comment>
<comment type="similarity">
    <text evidence="5">Belongs to the eutherian X-chromosome-specific Armcx family.</text>
</comment>
<comment type="sequence caution" evidence="5">
    <conflict type="erroneous initiation">
        <sequence resource="EMBL-CDS" id="BAD32238"/>
    </conflict>
</comment>
<gene>
    <name type="primary">Armcx2</name>
    <name type="synonym">Kiaa0512</name>
</gene>
<protein>
    <recommendedName>
        <fullName>Armadillo repeat-containing X-linked protein 2</fullName>
    </recommendedName>
</protein>
<proteinExistence type="evidence at transcript level"/>
<feature type="chain" id="PRO_0000191365" description="Armadillo repeat-containing X-linked protein 2">
    <location>
        <begin position="1"/>
        <end position="784"/>
    </location>
</feature>
<feature type="topological domain" description="Mitochondrial intermembrane" evidence="1">
    <location>
        <begin position="1"/>
        <end position="6"/>
    </location>
</feature>
<feature type="transmembrane region" description="Helical; Signal-anchor" evidence="2">
    <location>
        <begin position="7"/>
        <end position="27"/>
    </location>
</feature>
<feature type="topological domain" description="Cytoplasmic" evidence="1">
    <location>
        <begin position="28"/>
        <end position="784"/>
    </location>
</feature>
<feature type="repeat" description="ARM 1" evidence="2">
    <location>
        <begin position="528"/>
        <end position="568"/>
    </location>
</feature>
<feature type="repeat" description="ARM 2" evidence="2">
    <location>
        <begin position="570"/>
        <end position="609"/>
    </location>
</feature>
<feature type="repeat" description="ARM 3" evidence="2">
    <location>
        <begin position="650"/>
        <end position="689"/>
    </location>
</feature>
<feature type="region of interest" description="Mitochondrion outer membrane (MOM)-targeting sequence" evidence="6">
    <location>
        <begin position="1"/>
        <end position="6"/>
    </location>
</feature>
<feature type="region of interest" description="Mitochondrion outer membrane (MOM)-targeting sequence" evidence="6">
    <location>
        <begin position="26"/>
        <end position="40"/>
    </location>
</feature>
<feature type="region of interest" description="Disordered" evidence="3">
    <location>
        <begin position="328"/>
        <end position="353"/>
    </location>
</feature>
<feature type="region of interest" description="Disordered" evidence="3">
    <location>
        <begin position="388"/>
        <end position="461"/>
    </location>
</feature>
<feature type="region of interest" description="Disordered" evidence="3">
    <location>
        <begin position="488"/>
        <end position="522"/>
    </location>
</feature>
<feature type="compositionally biased region" description="Low complexity" evidence="3">
    <location>
        <begin position="396"/>
        <end position="418"/>
    </location>
</feature>
<feature type="compositionally biased region" description="Acidic residues" evidence="3">
    <location>
        <begin position="488"/>
        <end position="508"/>
    </location>
</feature>
<evidence type="ECO:0000250" key="1">
    <source>
        <dbReference type="UniProtKB" id="Q8BHS6"/>
    </source>
</evidence>
<evidence type="ECO:0000255" key="2"/>
<evidence type="ECO:0000256" key="3">
    <source>
        <dbReference type="SAM" id="MobiDB-lite"/>
    </source>
</evidence>
<evidence type="ECO:0000269" key="4">
    <source>
    </source>
</evidence>
<evidence type="ECO:0000305" key="5"/>
<evidence type="ECO:0000305" key="6">
    <source>
    </source>
</evidence>
<name>ARMX2_MOUSE</name>
<keyword id="KW-0472">Membrane</keyword>
<keyword id="KW-0496">Mitochondrion</keyword>
<keyword id="KW-1000">Mitochondrion outer membrane</keyword>
<keyword id="KW-1185">Reference proteome</keyword>
<keyword id="KW-0677">Repeat</keyword>
<keyword id="KW-0735">Signal-anchor</keyword>
<keyword id="KW-0812">Transmembrane</keyword>
<keyword id="KW-1133">Transmembrane helix</keyword>
<sequence length="784" mass="81036">MSRARDAGCVAAGIVIGASAWYCVYKYTRGKDQKKKRLTKPKNRASVGTGSRARAGLRAGFTIDLGPGFSPPNPVDIEIMNKAQGEASNLATTVAEEVAPAAPSPKVQNGAESKVQELNGAKTEANLESVVMPSATCTVTPPPKVAGGLTAAEAPEIIGAPKVLEAPSTTEASGAVAAPGPTVSPMIAQTPGPVVPSPTIVSTGPAAIPWAVAHPGAVQSPGPAVPPMAVQSLVPAAPSWAVVAPPGAVYIPVAAHFAGPAAASRVTQSPGTVIPPLPPPSSVLPRGVPSVPGRTVQSPGAAVHPVAAQSTGVVVPPRAVQYSGAAVTSGGAAVPSGGAATPRAAASTQRTASTEVMQVPRVAAATEATETPRIGTPAMVAEASLPVHSGAAENPGTSGSSKTAATGKKAAPGAHTGAIPKAGSATGAVPKGGGGKGGNKNRSGGKGKNRKNKVDVDELGMGFRPGDGAAAAAAASANGGQAFLAEIPESEEGESGWTDTESDSDSEPDVPQRGKGKRTIPMHKRPFPYEIDEILGVRDLRKVLALLQKSDDPFIQQVALLTLSNNANYSCNQETIRKLGGLPIIANMINKTDPHIKEKALMAMNNLSENYENQGRLQVYMNKVMDDIMASNLNSAVQVVGLKFLTNMTITNDYQHLLVNSIANFFRLLSQGGGKIKVEILKILSNFAENPDMLKKLLGTQVPSSFSSLYNSYVESEILINALTLFEIIFDNLRAEVFNYREFNKGSLFYLCTTSGVCVKKIRALANHHDLLVKVKVIKLVNKF</sequence>
<reference key="1">
    <citation type="journal article" date="2004" name="DNA Res.">
        <title>Prediction of the coding sequences of mouse homologues of KIAA gene: IV. The complete nucleotide sequences of 500 mouse KIAA-homologous cDNAs identified by screening of terminal sequences of cDNA clones randomly sampled from size-fractionated libraries.</title>
        <authorList>
            <person name="Okazaki N."/>
            <person name="Kikuno R."/>
            <person name="Ohara R."/>
            <person name="Inamoto S."/>
            <person name="Koseki H."/>
            <person name="Hiraoka S."/>
            <person name="Saga Y."/>
            <person name="Seino S."/>
            <person name="Nishimura M."/>
            <person name="Kaisho T."/>
            <person name="Hoshino K."/>
            <person name="Kitamura H."/>
            <person name="Nagase T."/>
            <person name="Ohara O."/>
            <person name="Koga H."/>
        </authorList>
    </citation>
    <scope>NUCLEOTIDE SEQUENCE [LARGE SCALE MRNA]</scope>
    <source>
        <tissue>Pancreatic islet</tissue>
    </source>
</reference>
<reference key="2">
    <citation type="journal article" date="2005" name="Science">
        <title>The transcriptional landscape of the mammalian genome.</title>
        <authorList>
            <person name="Carninci P."/>
            <person name="Kasukawa T."/>
            <person name="Katayama S."/>
            <person name="Gough J."/>
            <person name="Frith M.C."/>
            <person name="Maeda N."/>
            <person name="Oyama R."/>
            <person name="Ravasi T."/>
            <person name="Lenhard B."/>
            <person name="Wells C."/>
            <person name="Kodzius R."/>
            <person name="Shimokawa K."/>
            <person name="Bajic V.B."/>
            <person name="Brenner S.E."/>
            <person name="Batalov S."/>
            <person name="Forrest A.R."/>
            <person name="Zavolan M."/>
            <person name="Davis M.J."/>
            <person name="Wilming L.G."/>
            <person name="Aidinis V."/>
            <person name="Allen J.E."/>
            <person name="Ambesi-Impiombato A."/>
            <person name="Apweiler R."/>
            <person name="Aturaliya R.N."/>
            <person name="Bailey T.L."/>
            <person name="Bansal M."/>
            <person name="Baxter L."/>
            <person name="Beisel K.W."/>
            <person name="Bersano T."/>
            <person name="Bono H."/>
            <person name="Chalk A.M."/>
            <person name="Chiu K.P."/>
            <person name="Choudhary V."/>
            <person name="Christoffels A."/>
            <person name="Clutterbuck D.R."/>
            <person name="Crowe M.L."/>
            <person name="Dalla E."/>
            <person name="Dalrymple B.P."/>
            <person name="de Bono B."/>
            <person name="Della Gatta G."/>
            <person name="di Bernardo D."/>
            <person name="Down T."/>
            <person name="Engstrom P."/>
            <person name="Fagiolini M."/>
            <person name="Faulkner G."/>
            <person name="Fletcher C.F."/>
            <person name="Fukushima T."/>
            <person name="Furuno M."/>
            <person name="Futaki S."/>
            <person name="Gariboldi M."/>
            <person name="Georgii-Hemming P."/>
            <person name="Gingeras T.R."/>
            <person name="Gojobori T."/>
            <person name="Green R.E."/>
            <person name="Gustincich S."/>
            <person name="Harbers M."/>
            <person name="Hayashi Y."/>
            <person name="Hensch T.K."/>
            <person name="Hirokawa N."/>
            <person name="Hill D."/>
            <person name="Huminiecki L."/>
            <person name="Iacono M."/>
            <person name="Ikeo K."/>
            <person name="Iwama A."/>
            <person name="Ishikawa T."/>
            <person name="Jakt M."/>
            <person name="Kanapin A."/>
            <person name="Katoh M."/>
            <person name="Kawasawa Y."/>
            <person name="Kelso J."/>
            <person name="Kitamura H."/>
            <person name="Kitano H."/>
            <person name="Kollias G."/>
            <person name="Krishnan S.P."/>
            <person name="Kruger A."/>
            <person name="Kummerfeld S.K."/>
            <person name="Kurochkin I.V."/>
            <person name="Lareau L.F."/>
            <person name="Lazarevic D."/>
            <person name="Lipovich L."/>
            <person name="Liu J."/>
            <person name="Liuni S."/>
            <person name="McWilliam S."/>
            <person name="Madan Babu M."/>
            <person name="Madera M."/>
            <person name="Marchionni L."/>
            <person name="Matsuda H."/>
            <person name="Matsuzawa S."/>
            <person name="Miki H."/>
            <person name="Mignone F."/>
            <person name="Miyake S."/>
            <person name="Morris K."/>
            <person name="Mottagui-Tabar S."/>
            <person name="Mulder N."/>
            <person name="Nakano N."/>
            <person name="Nakauchi H."/>
            <person name="Ng P."/>
            <person name="Nilsson R."/>
            <person name="Nishiguchi S."/>
            <person name="Nishikawa S."/>
            <person name="Nori F."/>
            <person name="Ohara O."/>
            <person name="Okazaki Y."/>
            <person name="Orlando V."/>
            <person name="Pang K.C."/>
            <person name="Pavan W.J."/>
            <person name="Pavesi G."/>
            <person name="Pesole G."/>
            <person name="Petrovsky N."/>
            <person name="Piazza S."/>
            <person name="Reed J."/>
            <person name="Reid J.F."/>
            <person name="Ring B.Z."/>
            <person name="Ringwald M."/>
            <person name="Rost B."/>
            <person name="Ruan Y."/>
            <person name="Salzberg S.L."/>
            <person name="Sandelin A."/>
            <person name="Schneider C."/>
            <person name="Schoenbach C."/>
            <person name="Sekiguchi K."/>
            <person name="Semple C.A."/>
            <person name="Seno S."/>
            <person name="Sessa L."/>
            <person name="Sheng Y."/>
            <person name="Shibata Y."/>
            <person name="Shimada H."/>
            <person name="Shimada K."/>
            <person name="Silva D."/>
            <person name="Sinclair B."/>
            <person name="Sperling S."/>
            <person name="Stupka E."/>
            <person name="Sugiura K."/>
            <person name="Sultana R."/>
            <person name="Takenaka Y."/>
            <person name="Taki K."/>
            <person name="Tammoja K."/>
            <person name="Tan S.L."/>
            <person name="Tang S."/>
            <person name="Taylor M.S."/>
            <person name="Tegner J."/>
            <person name="Teichmann S.A."/>
            <person name="Ueda H.R."/>
            <person name="van Nimwegen E."/>
            <person name="Verardo R."/>
            <person name="Wei C.L."/>
            <person name="Yagi K."/>
            <person name="Yamanishi H."/>
            <person name="Zabarovsky E."/>
            <person name="Zhu S."/>
            <person name="Zimmer A."/>
            <person name="Hide W."/>
            <person name="Bult C."/>
            <person name="Grimmond S.M."/>
            <person name="Teasdale R.D."/>
            <person name="Liu E.T."/>
            <person name="Brusic V."/>
            <person name="Quackenbush J."/>
            <person name="Wahlestedt C."/>
            <person name="Mattick J.S."/>
            <person name="Hume D.A."/>
            <person name="Kai C."/>
            <person name="Sasaki D."/>
            <person name="Tomaru Y."/>
            <person name="Fukuda S."/>
            <person name="Kanamori-Katayama M."/>
            <person name="Suzuki M."/>
            <person name="Aoki J."/>
            <person name="Arakawa T."/>
            <person name="Iida J."/>
            <person name="Imamura K."/>
            <person name="Itoh M."/>
            <person name="Kato T."/>
            <person name="Kawaji H."/>
            <person name="Kawagashira N."/>
            <person name="Kawashima T."/>
            <person name="Kojima M."/>
            <person name="Kondo S."/>
            <person name="Konno H."/>
            <person name="Nakano K."/>
            <person name="Ninomiya N."/>
            <person name="Nishio T."/>
            <person name="Okada M."/>
            <person name="Plessy C."/>
            <person name="Shibata K."/>
            <person name="Shiraki T."/>
            <person name="Suzuki S."/>
            <person name="Tagami M."/>
            <person name="Waki K."/>
            <person name="Watahiki A."/>
            <person name="Okamura-Oho Y."/>
            <person name="Suzuki H."/>
            <person name="Kawai J."/>
            <person name="Hayashizaki Y."/>
        </authorList>
    </citation>
    <scope>NUCLEOTIDE SEQUENCE [LARGE SCALE MRNA]</scope>
    <source>
        <strain>C57BL/6J</strain>
        <tissue>Diencephalon</tissue>
        <tissue>Head</tissue>
    </source>
</reference>
<reference key="3">
    <citation type="journal article" date="2009" name="PLoS Biol.">
        <title>Lineage-specific biology revealed by a finished genome assembly of the mouse.</title>
        <authorList>
            <person name="Church D.M."/>
            <person name="Goodstadt L."/>
            <person name="Hillier L.W."/>
            <person name="Zody M.C."/>
            <person name="Goldstein S."/>
            <person name="She X."/>
            <person name="Bult C.J."/>
            <person name="Agarwala R."/>
            <person name="Cherry J.L."/>
            <person name="DiCuccio M."/>
            <person name="Hlavina W."/>
            <person name="Kapustin Y."/>
            <person name="Meric P."/>
            <person name="Maglott D."/>
            <person name="Birtle Z."/>
            <person name="Marques A.C."/>
            <person name="Graves T."/>
            <person name="Zhou S."/>
            <person name="Teague B."/>
            <person name="Potamousis K."/>
            <person name="Churas C."/>
            <person name="Place M."/>
            <person name="Herschleb J."/>
            <person name="Runnheim R."/>
            <person name="Forrest D."/>
            <person name="Amos-Landgraf J."/>
            <person name="Schwartz D.C."/>
            <person name="Cheng Z."/>
            <person name="Lindblad-Toh K."/>
            <person name="Eichler E.E."/>
            <person name="Ponting C.P."/>
        </authorList>
    </citation>
    <scope>NUCLEOTIDE SEQUENCE [LARGE SCALE GENOMIC DNA]</scope>
    <source>
        <strain>C57BL/6J</strain>
    </source>
</reference>
<reference key="4">
    <citation type="journal article" date="2004" name="Genome Res.">
        <title>The status, quality, and expansion of the NIH full-length cDNA project: the Mammalian Gene Collection (MGC).</title>
        <authorList>
            <consortium name="The MGC Project Team"/>
        </authorList>
    </citation>
    <scope>NUCLEOTIDE SEQUENCE [LARGE SCALE MRNA]</scope>
    <source>
        <tissue>Eye</tissue>
    </source>
</reference>
<reference key="5">
    <citation type="journal article" date="2012" name="Nat. Commun.">
        <title>The eutherian Armcx genes regulate mitochondrial trafficking in neurons and interact with Miro and Trak2.</title>
        <authorList>
            <person name="Lopez-Domenech G."/>
            <person name="Serrat R."/>
            <person name="Mirra S."/>
            <person name="D'Aniello S."/>
            <person name="Somorjai I."/>
            <person name="Abad A."/>
            <person name="Vitureira N."/>
            <person name="Garcia-Arumi E."/>
            <person name="Alonso M.T."/>
            <person name="Rodriguez-Prados M."/>
            <person name="Burgaya F."/>
            <person name="Andreu A.L."/>
            <person name="Garcia-Sancho J."/>
            <person name="Trullas R."/>
            <person name="Garcia-Fernandez J."/>
            <person name="Soriano E."/>
        </authorList>
    </citation>
    <scope>FUNCTION</scope>
    <scope>SUBCELLULAR LOCATION</scope>
    <scope>TISSUE SPECIFICITY</scope>
</reference>
<accession>Q6A058</accession>
<accession>A2AKS5</accession>
<accession>Q9CXI9</accession>
<dbReference type="EMBL" id="AK172960">
    <property type="protein sequence ID" value="BAD32238.1"/>
    <property type="status" value="ALT_INIT"/>
    <property type="molecule type" value="mRNA"/>
</dbReference>
<dbReference type="EMBL" id="AK014329">
    <property type="protein sequence ID" value="BAB29276.1"/>
    <property type="molecule type" value="mRNA"/>
</dbReference>
<dbReference type="EMBL" id="AK034185">
    <property type="protein sequence ID" value="BAC28622.1"/>
    <property type="molecule type" value="mRNA"/>
</dbReference>
<dbReference type="EMBL" id="AK044926">
    <property type="protein sequence ID" value="BAC32145.1"/>
    <property type="molecule type" value="mRNA"/>
</dbReference>
<dbReference type="EMBL" id="AL772348">
    <property type="status" value="NOT_ANNOTATED_CDS"/>
    <property type="molecule type" value="Genomic_DNA"/>
</dbReference>
<dbReference type="EMBL" id="BC054839">
    <property type="protein sequence ID" value="AAH54839.1"/>
    <property type="molecule type" value="mRNA"/>
</dbReference>
<dbReference type="CCDS" id="CCDS30401.1"/>
<dbReference type="RefSeq" id="NP_001159869.1">
    <property type="nucleotide sequence ID" value="NM_001166397.1"/>
</dbReference>
<dbReference type="RefSeq" id="NP_001159870.1">
    <property type="nucleotide sequence ID" value="NM_001166398.1"/>
</dbReference>
<dbReference type="RefSeq" id="NP_080415.3">
    <property type="nucleotide sequence ID" value="NM_026139.4"/>
</dbReference>
<dbReference type="RefSeq" id="XP_006528663.1">
    <property type="nucleotide sequence ID" value="XM_006528600.2"/>
</dbReference>
<dbReference type="RefSeq" id="XP_006528665.1">
    <property type="nucleotide sequence ID" value="XM_006528602.2"/>
</dbReference>
<dbReference type="RefSeq" id="XP_006528666.1">
    <property type="nucleotide sequence ID" value="XM_006528603.3"/>
</dbReference>
<dbReference type="RefSeq" id="XP_036017972.1">
    <property type="nucleotide sequence ID" value="XM_036162079.1"/>
</dbReference>
<dbReference type="SMR" id="Q6A058"/>
<dbReference type="BioGRID" id="212171">
    <property type="interactions" value="1"/>
</dbReference>
<dbReference type="FunCoup" id="Q6A058">
    <property type="interactions" value="781"/>
</dbReference>
<dbReference type="STRING" id="10090.ENSMUSP00000127305"/>
<dbReference type="GlyGen" id="Q6A058">
    <property type="glycosylation" value="7 sites, 1 N-linked glycan (1 site), 1 O-linked glycan (5 sites)"/>
</dbReference>
<dbReference type="iPTMnet" id="Q6A058"/>
<dbReference type="PhosphoSitePlus" id="Q6A058"/>
<dbReference type="PaxDb" id="10090-ENSMUSP00000108818"/>
<dbReference type="PeptideAtlas" id="Q6A058"/>
<dbReference type="ProteomicsDB" id="277305"/>
<dbReference type="Pumba" id="Q6A058"/>
<dbReference type="Antibodypedia" id="28782">
    <property type="antibodies" value="153 antibodies from 26 providers"/>
</dbReference>
<dbReference type="DNASU" id="67416"/>
<dbReference type="Ensembl" id="ENSMUST00000035559.11">
    <property type="protein sequence ID" value="ENSMUSP00000049147.5"/>
    <property type="gene ID" value="ENSMUSG00000033436.14"/>
</dbReference>
<dbReference type="Ensembl" id="ENSMUST00000113193.9">
    <property type="protein sequence ID" value="ENSMUSP00000108818.3"/>
    <property type="gene ID" value="ENSMUSG00000033436.14"/>
</dbReference>
<dbReference type="Ensembl" id="ENSMUST00000119010.8">
    <property type="protein sequence ID" value="ENSMUSP00000112507.2"/>
    <property type="gene ID" value="ENSMUSG00000033436.14"/>
</dbReference>
<dbReference type="Ensembl" id="ENSMUST00000168264.2">
    <property type="protein sequence ID" value="ENSMUSP00000127305.2"/>
    <property type="gene ID" value="ENSMUSG00000033436.14"/>
</dbReference>
<dbReference type="GeneID" id="67416"/>
<dbReference type="KEGG" id="mmu:67416"/>
<dbReference type="UCSC" id="uc009ugq.2">
    <property type="organism name" value="mouse"/>
</dbReference>
<dbReference type="AGR" id="MGI:1914666"/>
<dbReference type="CTD" id="9823"/>
<dbReference type="MGI" id="MGI:1914666">
    <property type="gene designation" value="Armcx2"/>
</dbReference>
<dbReference type="VEuPathDB" id="HostDB:ENSMUSG00000033436"/>
<dbReference type="eggNOG" id="ENOG502QQ2D">
    <property type="taxonomic scope" value="Eukaryota"/>
</dbReference>
<dbReference type="GeneTree" id="ENSGT00940000163008"/>
<dbReference type="HOGENOM" id="CLU_028273_0_0_1"/>
<dbReference type="InParanoid" id="Q6A058"/>
<dbReference type="OMA" id="YNYREFN"/>
<dbReference type="OrthoDB" id="10017790at2759"/>
<dbReference type="PhylomeDB" id="Q6A058"/>
<dbReference type="TreeFam" id="TF335652"/>
<dbReference type="BioGRID-ORCS" id="67416">
    <property type="hits" value="0 hits in 77 CRISPR screens"/>
</dbReference>
<dbReference type="ChiTaRS" id="Armcx2">
    <property type="organism name" value="mouse"/>
</dbReference>
<dbReference type="PRO" id="PR:Q6A058"/>
<dbReference type="Proteomes" id="UP000000589">
    <property type="component" value="Chromosome X"/>
</dbReference>
<dbReference type="RNAct" id="Q6A058">
    <property type="molecule type" value="protein"/>
</dbReference>
<dbReference type="Bgee" id="ENSMUSG00000033436">
    <property type="expression patterns" value="Expressed in indifferent gonad and 250 other cell types or tissues"/>
</dbReference>
<dbReference type="GO" id="GO:0005741">
    <property type="term" value="C:mitochondrial outer membrane"/>
    <property type="evidence" value="ECO:0007669"/>
    <property type="project" value="UniProtKB-SubCell"/>
</dbReference>
<dbReference type="Gene3D" id="1.25.10.10">
    <property type="entry name" value="Leucine-rich Repeat Variant"/>
    <property type="match status" value="1"/>
</dbReference>
<dbReference type="InterPro" id="IPR011989">
    <property type="entry name" value="ARM-like"/>
</dbReference>
<dbReference type="InterPro" id="IPR006911">
    <property type="entry name" value="ARM-rpt_dom"/>
</dbReference>
<dbReference type="InterPro" id="IPR016024">
    <property type="entry name" value="ARM-type_fold"/>
</dbReference>
<dbReference type="InterPro" id="IPR000225">
    <property type="entry name" value="Armadillo"/>
</dbReference>
<dbReference type="InterPro" id="IPR051303">
    <property type="entry name" value="Armcx_regulator"/>
</dbReference>
<dbReference type="PANTHER" id="PTHR15712">
    <property type="entry name" value="ARMADILLO REPEAT CONTAINING PROTEIN"/>
    <property type="match status" value="1"/>
</dbReference>
<dbReference type="PANTHER" id="PTHR15712:SF9">
    <property type="entry name" value="ARMADILLO REPEAT-CONTAINING X-LINKED PROTEIN 2"/>
    <property type="match status" value="1"/>
</dbReference>
<dbReference type="Pfam" id="PF04826">
    <property type="entry name" value="Arm_2"/>
    <property type="match status" value="1"/>
</dbReference>
<dbReference type="SMART" id="SM00185">
    <property type="entry name" value="ARM"/>
    <property type="match status" value="1"/>
</dbReference>
<dbReference type="SUPFAM" id="SSF48371">
    <property type="entry name" value="ARM repeat"/>
    <property type="match status" value="1"/>
</dbReference>
<organism>
    <name type="scientific">Mus musculus</name>
    <name type="common">Mouse</name>
    <dbReference type="NCBI Taxonomy" id="10090"/>
    <lineage>
        <taxon>Eukaryota</taxon>
        <taxon>Metazoa</taxon>
        <taxon>Chordata</taxon>
        <taxon>Craniata</taxon>
        <taxon>Vertebrata</taxon>
        <taxon>Euteleostomi</taxon>
        <taxon>Mammalia</taxon>
        <taxon>Eutheria</taxon>
        <taxon>Euarchontoglires</taxon>
        <taxon>Glires</taxon>
        <taxon>Rodentia</taxon>
        <taxon>Myomorpha</taxon>
        <taxon>Muroidea</taxon>
        <taxon>Muridae</taxon>
        <taxon>Murinae</taxon>
        <taxon>Mus</taxon>
        <taxon>Mus</taxon>
    </lineage>
</organism>